<reference key="1">
    <citation type="submission" date="2006-12" db="EMBL/GenBank/DDBJ databases">
        <title>Complete sequence of Mycobacterium vanbaalenii PYR-1.</title>
        <authorList>
            <consortium name="US DOE Joint Genome Institute"/>
            <person name="Copeland A."/>
            <person name="Lucas S."/>
            <person name="Lapidus A."/>
            <person name="Barry K."/>
            <person name="Detter J.C."/>
            <person name="Glavina del Rio T."/>
            <person name="Hammon N."/>
            <person name="Israni S."/>
            <person name="Dalin E."/>
            <person name="Tice H."/>
            <person name="Pitluck S."/>
            <person name="Singan V."/>
            <person name="Schmutz J."/>
            <person name="Larimer F."/>
            <person name="Land M."/>
            <person name="Hauser L."/>
            <person name="Kyrpides N."/>
            <person name="Anderson I.J."/>
            <person name="Miller C."/>
            <person name="Richardson P."/>
        </authorList>
    </citation>
    <scope>NUCLEOTIDE SEQUENCE [LARGE SCALE GENOMIC DNA]</scope>
    <source>
        <strain>DSM 7251 / JCM 13017 / BCRC 16820 / KCTC 9966 / NRRL B-24157 / PYR-1</strain>
    </source>
</reference>
<accession>A1T2V5</accession>
<name>NHAA1_MYCVP</name>
<evidence type="ECO:0000255" key="1">
    <source>
        <dbReference type="HAMAP-Rule" id="MF_01844"/>
    </source>
</evidence>
<evidence type="ECO:0000305" key="2"/>
<organism>
    <name type="scientific">Mycolicibacterium vanbaalenii (strain DSM 7251 / JCM 13017 / BCRC 16820 / KCTC 9966 / NRRL B-24157 / PYR-1)</name>
    <name type="common">Mycobacterium vanbaalenii</name>
    <dbReference type="NCBI Taxonomy" id="350058"/>
    <lineage>
        <taxon>Bacteria</taxon>
        <taxon>Bacillati</taxon>
        <taxon>Actinomycetota</taxon>
        <taxon>Actinomycetes</taxon>
        <taxon>Mycobacteriales</taxon>
        <taxon>Mycobacteriaceae</taxon>
        <taxon>Mycolicibacterium</taxon>
    </lineage>
</organism>
<comment type="function">
    <text evidence="1">Na(+)/H(+) antiporter that extrudes sodium in exchange for external protons.</text>
</comment>
<comment type="catalytic activity">
    <reaction evidence="1">
        <text>Na(+)(in) + 2 H(+)(out) = Na(+)(out) + 2 H(+)(in)</text>
        <dbReference type="Rhea" id="RHEA:29251"/>
        <dbReference type="ChEBI" id="CHEBI:15378"/>
        <dbReference type="ChEBI" id="CHEBI:29101"/>
    </reaction>
    <physiologicalReaction direction="left-to-right" evidence="1">
        <dbReference type="Rhea" id="RHEA:29252"/>
    </physiologicalReaction>
</comment>
<comment type="subcellular location">
    <subcellularLocation>
        <location evidence="1">Cell membrane</location>
        <topology evidence="1">Multi-pass membrane protein</topology>
    </subcellularLocation>
</comment>
<comment type="similarity">
    <text evidence="2">In the N-terminal section; belongs to the NhaA Na(+)/H(+) (TC 2.A.33) antiporter family.</text>
</comment>
<proteinExistence type="inferred from homology"/>
<keyword id="KW-0050">Antiport</keyword>
<keyword id="KW-1003">Cell membrane</keyword>
<keyword id="KW-0406">Ion transport</keyword>
<keyword id="KW-0472">Membrane</keyword>
<keyword id="KW-0915">Sodium</keyword>
<keyword id="KW-0739">Sodium transport</keyword>
<keyword id="KW-0812">Transmembrane</keyword>
<keyword id="KW-1133">Transmembrane helix</keyword>
<keyword id="KW-0813">Transport</keyword>
<sequence length="617" mass="66904">MTVTEQTTARGFPLLPSRLSRGSQATRTTDNTAAALLLTFTVIAILWANSPWAQSYSTLLETHIGFGFGDHHFEMTVKHLVNDALMTFFFFIVGLEVTREFTIGELTDRSRAAVPVVAAAAGLIVPAIVFLAFNPSGDNAHAWGVVISTDTAFLVGALAIIKPKFPARVRLFLLTLAVVDDVGALVAIAVFYSDAIQVGPLVVAVAVLVALALVRFLPVARGPAYAVLGVALWVALYLAGIHPTLAGVAVALLIPVFTPERRPVERAVDQIRAFRQSPNSQYARAASRSLRESISINERMQTAVGPAVSFVILPLFALVNAGVLLDGQSLMTALRSPLTWGVVAGLVIGKFVGITGATWLMRRTGLGVLAPGLTLRRIAGGAALSGIGFTISLFIVDIAISDSSRQDQARIGVLAASVLAFVFGWAIFRITDWLSPPEPVGLKLLRPVEPDRDHVRGRYDAPLVLVEYGDFECPFCSRATGAIDEVRAHFGDDLLYVWRHFPLERAHPRAFDAARASEAAALQGKFWEMAHELFDHQDDLEWSDMYRYAVAAGCDIEQFDQDVRVHSSKVLHRVTDDAEDAEAMDLNATPTLFVNGIRHKGPWDAASLIRALEAGRR</sequence>
<feature type="chain" id="PRO_0000334482" description="Na(+)/H(+) antiporter NhaA 1">
    <location>
        <begin position="1"/>
        <end position="617"/>
    </location>
</feature>
<feature type="transmembrane region" description="Helical" evidence="1">
    <location>
        <begin position="33"/>
        <end position="53"/>
    </location>
</feature>
<feature type="transmembrane region" description="Helical" evidence="1">
    <location>
        <begin position="75"/>
        <end position="95"/>
    </location>
</feature>
<feature type="transmembrane region" description="Helical" evidence="1">
    <location>
        <begin position="113"/>
        <end position="133"/>
    </location>
</feature>
<feature type="transmembrane region" description="Helical" evidence="1">
    <location>
        <begin position="141"/>
        <end position="161"/>
    </location>
</feature>
<feature type="transmembrane region" description="Helical" evidence="1">
    <location>
        <begin position="171"/>
        <end position="191"/>
    </location>
</feature>
<feature type="transmembrane region" description="Helical" evidence="1">
    <location>
        <begin position="194"/>
        <end position="214"/>
    </location>
</feature>
<feature type="transmembrane region" description="Helical" evidence="1">
    <location>
        <begin position="234"/>
        <end position="254"/>
    </location>
</feature>
<feature type="transmembrane region" description="Helical" evidence="1">
    <location>
        <begin position="304"/>
        <end position="324"/>
    </location>
</feature>
<feature type="transmembrane region" description="Helical" evidence="1">
    <location>
        <begin position="340"/>
        <end position="360"/>
    </location>
</feature>
<feature type="transmembrane region" description="Helical" evidence="1">
    <location>
        <begin position="378"/>
        <end position="398"/>
    </location>
</feature>
<feature type="transmembrane region" description="Helical" evidence="1">
    <location>
        <begin position="411"/>
        <end position="431"/>
    </location>
</feature>
<feature type="domain" description="Thioredoxin">
    <location>
        <begin position="434"/>
        <end position="617"/>
    </location>
</feature>
<feature type="region of interest" description="Na(+)/H(+) antiporter NhaA">
    <location>
        <begin position="1"/>
        <end position="433"/>
    </location>
</feature>
<dbReference type="EMBL" id="CP000511">
    <property type="protein sequence ID" value="ABM11505.1"/>
    <property type="molecule type" value="Genomic_DNA"/>
</dbReference>
<dbReference type="RefSeq" id="WP_011777942.1">
    <property type="nucleotide sequence ID" value="NC_008726.1"/>
</dbReference>
<dbReference type="SMR" id="A1T2V5"/>
<dbReference type="STRING" id="350058.Mvan_0667"/>
<dbReference type="KEGG" id="mva:Mvan_0667"/>
<dbReference type="eggNOG" id="COG1651">
    <property type="taxonomic scope" value="Bacteria"/>
</dbReference>
<dbReference type="eggNOG" id="COG3004">
    <property type="taxonomic scope" value="Bacteria"/>
</dbReference>
<dbReference type="HOGENOM" id="CLU_015803_3_0_11"/>
<dbReference type="Proteomes" id="UP000009159">
    <property type="component" value="Chromosome"/>
</dbReference>
<dbReference type="GO" id="GO:0005886">
    <property type="term" value="C:plasma membrane"/>
    <property type="evidence" value="ECO:0007669"/>
    <property type="project" value="UniProtKB-SubCell"/>
</dbReference>
<dbReference type="GO" id="GO:0016491">
    <property type="term" value="F:oxidoreductase activity"/>
    <property type="evidence" value="ECO:0007669"/>
    <property type="project" value="UniProtKB-ARBA"/>
</dbReference>
<dbReference type="GO" id="GO:0015385">
    <property type="term" value="F:sodium:proton antiporter activity"/>
    <property type="evidence" value="ECO:0007669"/>
    <property type="project" value="TreeGrafter"/>
</dbReference>
<dbReference type="GO" id="GO:0006885">
    <property type="term" value="P:regulation of pH"/>
    <property type="evidence" value="ECO:0007669"/>
    <property type="project" value="InterPro"/>
</dbReference>
<dbReference type="CDD" id="cd02972">
    <property type="entry name" value="DsbA_family"/>
    <property type="match status" value="1"/>
</dbReference>
<dbReference type="Gene3D" id="3.40.30.10">
    <property type="entry name" value="Glutaredoxin"/>
    <property type="match status" value="1"/>
</dbReference>
<dbReference type="Gene3D" id="1.20.1530.10">
    <property type="entry name" value="Na+/H+ antiporter like domain"/>
    <property type="match status" value="1"/>
</dbReference>
<dbReference type="HAMAP" id="MF_01844">
    <property type="entry name" value="NhaA"/>
    <property type="match status" value="1"/>
</dbReference>
<dbReference type="InterPro" id="IPR023171">
    <property type="entry name" value="Na/H_antiporter_dom_sf"/>
</dbReference>
<dbReference type="InterPro" id="IPR004670">
    <property type="entry name" value="NhaA"/>
</dbReference>
<dbReference type="InterPro" id="IPR012336">
    <property type="entry name" value="Thioredoxin-like_fold"/>
</dbReference>
<dbReference type="InterPro" id="IPR036249">
    <property type="entry name" value="Thioredoxin-like_sf"/>
</dbReference>
<dbReference type="InterPro" id="IPR013766">
    <property type="entry name" value="Thioredoxin_domain"/>
</dbReference>
<dbReference type="NCBIfam" id="TIGR00773">
    <property type="entry name" value="NhaA"/>
    <property type="match status" value="1"/>
</dbReference>
<dbReference type="PANTHER" id="PTHR30341:SF0">
    <property type="entry name" value="NA(+)_H(+) ANTIPORTER NHAA"/>
    <property type="match status" value="1"/>
</dbReference>
<dbReference type="PANTHER" id="PTHR30341">
    <property type="entry name" value="SODIUM ION/PROTON ANTIPORTER NHAA-RELATED"/>
    <property type="match status" value="1"/>
</dbReference>
<dbReference type="Pfam" id="PF06965">
    <property type="entry name" value="Na_H_antiport_1"/>
    <property type="match status" value="1"/>
</dbReference>
<dbReference type="Pfam" id="PF13462">
    <property type="entry name" value="Thioredoxin_4"/>
    <property type="match status" value="1"/>
</dbReference>
<dbReference type="SUPFAM" id="SSF52833">
    <property type="entry name" value="Thioredoxin-like"/>
    <property type="match status" value="1"/>
</dbReference>
<dbReference type="PROSITE" id="PS51352">
    <property type="entry name" value="THIOREDOXIN_2"/>
    <property type="match status" value="1"/>
</dbReference>
<gene>
    <name evidence="1" type="primary">nhaA1</name>
    <name type="ordered locus">Mvan_0667</name>
</gene>
<protein>
    <recommendedName>
        <fullName evidence="1">Na(+)/H(+) antiporter NhaA 1</fullName>
    </recommendedName>
    <alternativeName>
        <fullName evidence="1">Sodium/proton antiporter NhaA 1</fullName>
    </alternativeName>
</protein>